<dbReference type="EMBL" id="CP001043">
    <property type="protein sequence ID" value="ACC72021.1"/>
    <property type="molecule type" value="Genomic_DNA"/>
</dbReference>
<dbReference type="RefSeq" id="WP_012402202.1">
    <property type="nucleotide sequence ID" value="NC_010622.1"/>
</dbReference>
<dbReference type="SMR" id="B2JIH5"/>
<dbReference type="STRING" id="391038.Bphy_2849"/>
<dbReference type="KEGG" id="bph:Bphy_2849"/>
<dbReference type="eggNOG" id="COG0222">
    <property type="taxonomic scope" value="Bacteria"/>
</dbReference>
<dbReference type="HOGENOM" id="CLU_086499_3_2_4"/>
<dbReference type="OrthoDB" id="9811748at2"/>
<dbReference type="Proteomes" id="UP000001192">
    <property type="component" value="Chromosome 1"/>
</dbReference>
<dbReference type="GO" id="GO:0022625">
    <property type="term" value="C:cytosolic large ribosomal subunit"/>
    <property type="evidence" value="ECO:0007669"/>
    <property type="project" value="TreeGrafter"/>
</dbReference>
<dbReference type="GO" id="GO:0003729">
    <property type="term" value="F:mRNA binding"/>
    <property type="evidence" value="ECO:0007669"/>
    <property type="project" value="TreeGrafter"/>
</dbReference>
<dbReference type="GO" id="GO:0003735">
    <property type="term" value="F:structural constituent of ribosome"/>
    <property type="evidence" value="ECO:0007669"/>
    <property type="project" value="InterPro"/>
</dbReference>
<dbReference type="GO" id="GO:0006412">
    <property type="term" value="P:translation"/>
    <property type="evidence" value="ECO:0007669"/>
    <property type="project" value="UniProtKB-UniRule"/>
</dbReference>
<dbReference type="CDD" id="cd00387">
    <property type="entry name" value="Ribosomal_L7_L12"/>
    <property type="match status" value="1"/>
</dbReference>
<dbReference type="FunFam" id="3.30.1390.10:FF:000001">
    <property type="entry name" value="50S ribosomal protein L7/L12"/>
    <property type="match status" value="1"/>
</dbReference>
<dbReference type="Gene3D" id="3.30.1390.10">
    <property type="match status" value="1"/>
</dbReference>
<dbReference type="Gene3D" id="1.20.5.710">
    <property type="entry name" value="Single helix bin"/>
    <property type="match status" value="1"/>
</dbReference>
<dbReference type="HAMAP" id="MF_00368">
    <property type="entry name" value="Ribosomal_bL12"/>
    <property type="match status" value="1"/>
</dbReference>
<dbReference type="InterPro" id="IPR000206">
    <property type="entry name" value="Ribosomal_bL12"/>
</dbReference>
<dbReference type="InterPro" id="IPR013823">
    <property type="entry name" value="Ribosomal_bL12_C"/>
</dbReference>
<dbReference type="InterPro" id="IPR014719">
    <property type="entry name" value="Ribosomal_bL12_C/ClpS-like"/>
</dbReference>
<dbReference type="InterPro" id="IPR008932">
    <property type="entry name" value="Ribosomal_bL12_oligo"/>
</dbReference>
<dbReference type="InterPro" id="IPR036235">
    <property type="entry name" value="Ribosomal_bL12_oligo_N_sf"/>
</dbReference>
<dbReference type="NCBIfam" id="TIGR00855">
    <property type="entry name" value="L12"/>
    <property type="match status" value="1"/>
</dbReference>
<dbReference type="PANTHER" id="PTHR45987">
    <property type="entry name" value="39S RIBOSOMAL PROTEIN L12"/>
    <property type="match status" value="1"/>
</dbReference>
<dbReference type="PANTHER" id="PTHR45987:SF4">
    <property type="entry name" value="LARGE RIBOSOMAL SUBUNIT PROTEIN BL12M"/>
    <property type="match status" value="1"/>
</dbReference>
<dbReference type="Pfam" id="PF00542">
    <property type="entry name" value="Ribosomal_L12"/>
    <property type="match status" value="1"/>
</dbReference>
<dbReference type="Pfam" id="PF16320">
    <property type="entry name" value="Ribosomal_L12_N"/>
    <property type="match status" value="1"/>
</dbReference>
<dbReference type="SUPFAM" id="SSF54736">
    <property type="entry name" value="ClpS-like"/>
    <property type="match status" value="1"/>
</dbReference>
<dbReference type="SUPFAM" id="SSF48300">
    <property type="entry name" value="Ribosomal protein L7/12, oligomerisation (N-terminal) domain"/>
    <property type="match status" value="1"/>
</dbReference>
<protein>
    <recommendedName>
        <fullName evidence="1">Large ribosomal subunit protein bL12</fullName>
    </recommendedName>
    <alternativeName>
        <fullName evidence="2">50S ribosomal protein L7/L12</fullName>
    </alternativeName>
</protein>
<feature type="chain" id="PRO_1000121405" description="Large ribosomal subunit protein bL12">
    <location>
        <begin position="1"/>
        <end position="125"/>
    </location>
</feature>
<comment type="function">
    <text evidence="1">Forms part of the ribosomal stalk which helps the ribosome interact with GTP-bound translation factors. Is thus essential for accurate translation.</text>
</comment>
<comment type="subunit">
    <text evidence="1">Homodimer. Part of the ribosomal stalk of the 50S ribosomal subunit. Forms a multimeric L10(L12)X complex, where L10 forms an elongated spine to which 2 to 4 L12 dimers bind in a sequential fashion. Binds GTP-bound translation factors.</text>
</comment>
<comment type="similarity">
    <text evidence="1">Belongs to the bacterial ribosomal protein bL12 family.</text>
</comment>
<reference key="1">
    <citation type="journal article" date="2014" name="Stand. Genomic Sci.">
        <title>Complete genome sequence of Burkholderia phymatum STM815(T), a broad host range and efficient nitrogen-fixing symbiont of Mimosa species.</title>
        <authorList>
            <person name="Moulin L."/>
            <person name="Klonowska A."/>
            <person name="Caroline B."/>
            <person name="Booth K."/>
            <person name="Vriezen J.A."/>
            <person name="Melkonian R."/>
            <person name="James E.K."/>
            <person name="Young J.P."/>
            <person name="Bena G."/>
            <person name="Hauser L."/>
            <person name="Land M."/>
            <person name="Kyrpides N."/>
            <person name="Bruce D."/>
            <person name="Chain P."/>
            <person name="Copeland A."/>
            <person name="Pitluck S."/>
            <person name="Woyke T."/>
            <person name="Lizotte-Waniewski M."/>
            <person name="Bristow J."/>
            <person name="Riley M."/>
        </authorList>
    </citation>
    <scope>NUCLEOTIDE SEQUENCE [LARGE SCALE GENOMIC DNA]</scope>
    <source>
        <strain>DSM 17167 / CIP 108236 / LMG 21445 / STM815</strain>
    </source>
</reference>
<evidence type="ECO:0000255" key="1">
    <source>
        <dbReference type="HAMAP-Rule" id="MF_00368"/>
    </source>
</evidence>
<evidence type="ECO:0000305" key="2"/>
<sequence>MAIAKEDILEAVGAMSVLELNELVKAFEEKFGVSAAAVAVAGPAGAGGGAAAAEEQTEFTVILSEAGANKVSVIKAVRELTGLGLKEAKDLVDGAPKPVKEAVPKAAAEEAKKKLEEAGAKAEIK</sequence>
<accession>B2JIH5</accession>
<gene>
    <name evidence="1" type="primary">rplL</name>
    <name type="ordered locus">Bphy_2849</name>
</gene>
<name>RL7_PARP8</name>
<keyword id="KW-1185">Reference proteome</keyword>
<keyword id="KW-0687">Ribonucleoprotein</keyword>
<keyword id="KW-0689">Ribosomal protein</keyword>
<organism>
    <name type="scientific">Paraburkholderia phymatum (strain DSM 17167 / CIP 108236 / LMG 21445 / STM815)</name>
    <name type="common">Burkholderia phymatum</name>
    <dbReference type="NCBI Taxonomy" id="391038"/>
    <lineage>
        <taxon>Bacteria</taxon>
        <taxon>Pseudomonadati</taxon>
        <taxon>Pseudomonadota</taxon>
        <taxon>Betaproteobacteria</taxon>
        <taxon>Burkholderiales</taxon>
        <taxon>Burkholderiaceae</taxon>
        <taxon>Paraburkholderia</taxon>
    </lineage>
</organism>
<proteinExistence type="inferred from homology"/>